<proteinExistence type="evidence at transcript level"/>
<keyword id="KW-0808">Transferase</keyword>
<reference key="1">
    <citation type="journal article" date="2011" name="Appl. Environ. Microbiol.">
        <title>Identification of loci and functional characterization of trichothecene biosynthesis genes in filamentous fungi of the genus Trichoderma.</title>
        <authorList>
            <person name="Cardoza R.E."/>
            <person name="Malmierca M.G."/>
            <person name="Hermosa M.R."/>
            <person name="Alexander N.J."/>
            <person name="McCormick S.P."/>
            <person name="Proctor R.H."/>
            <person name="Tijerino A.M."/>
            <person name="Rumbero A."/>
            <person name="Monte E."/>
            <person name="Gutierrez S."/>
        </authorList>
    </citation>
    <scope>NUCLEOTIDE SEQUENCE [GENOMIC DNA]</scope>
    <scope>IDENTIFICATION</scope>
    <scope>FUNCTION</scope>
    <scope>PATHWAY</scope>
    <source>
        <strain>IBT 40837</strain>
    </source>
</reference>
<reference key="2">
    <citation type="journal article" date="2018" name="Fungal Genet. Biol.">
        <title>Effect of deletion of a trichothecene toxin regulatory gene on the secondary metabolism transcriptome of the saprotrophic fungus Trichoderma arundinaceum.</title>
        <authorList>
            <person name="Lindo L."/>
            <person name="McCormick S.P."/>
            <person name="Cardoza R.E."/>
            <person name="Brown D.W."/>
            <person name="Kim H.S."/>
            <person name="Alexander N.J."/>
            <person name="Proctor R.H."/>
            <person name="Gutierrez S."/>
        </authorList>
    </citation>
    <scope>FUNCTION</scope>
    <scope>INDUCTION</scope>
</reference>
<comment type="function">
    <text evidence="2 6 7">Trichothecene O-acetyltransferase; part of the gene cluster that mediates the production of the antimicrobial trichothecene harzianum A (HA) that plays a role in Botrytis cinerea antagonistic activity and plant defense priming (PubMed:21642405). The biosynthesis of harzianum A begins with the cyclization of farnesyl diphosphate to trichodiene and is catalyzed by the trichodiene synthase TRI5 (PubMed:21642405). Trichodiene undergoes a series of oxygenations catalyzed by the cytochrome P450 monooxygenase TRI4. TRI4 controls the addition of 3 oxygens at C-2, C-11, and the C-12, C-13-epoxide to form the intermediate isotrichodiol (PubMed:21642405). Isotrichodiol then undergoes a non-enzymatic isomerization and cyclization to form 12,13-epoxytrichothec-9-ene (EPT) which is further converted to trichodermol by the cytochrome P450 monooxygenase TRI11 via C-4 hydroxylation (PubMed:21642405). The last step of HA synthesis is esterification of an octatriendioyl moiety to the C-4 oxygen of trichodermol. The octatriendioyl moiety is probably produced by the polyketide synthase TRI17 and the esterification performed by the trichothecene O-acetyltransferase TRI3 (Probable).</text>
</comment>
<comment type="pathway">
    <text evidence="6">Sesquiterpene biosynthesis; trichothecene biosynthesis.</text>
</comment>
<comment type="induction">
    <text evidence="3">Expression is positively regulated by the cluster-specific transcription factor TRI6.</text>
</comment>
<comment type="similarity">
    <text evidence="5">Belongs to the trichothecene O-acetyltransferase family.</text>
</comment>
<organism>
    <name type="scientific">Trichoderma arundinaceum</name>
    <dbReference type="NCBI Taxonomy" id="490622"/>
    <lineage>
        <taxon>Eukaryota</taxon>
        <taxon>Fungi</taxon>
        <taxon>Dikarya</taxon>
        <taxon>Ascomycota</taxon>
        <taxon>Pezizomycotina</taxon>
        <taxon>Sordariomycetes</taxon>
        <taxon>Hypocreomycetidae</taxon>
        <taxon>Hypocreales</taxon>
        <taxon>Hypocreaceae</taxon>
        <taxon>Trichoderma</taxon>
    </lineage>
</organism>
<gene>
    <name evidence="4" type="primary">TRI3</name>
</gene>
<name>TRI3_TRIAR</name>
<feature type="chain" id="PRO_0000445608" description="Trichothecene O-acetyltransferase TRI3">
    <location>
        <begin position="1"/>
        <end position="520"/>
    </location>
</feature>
<feature type="region of interest" description="Disordered" evidence="1">
    <location>
        <begin position="1"/>
        <end position="23"/>
    </location>
</feature>
<feature type="compositionally biased region" description="Basic and acidic residues" evidence="1">
    <location>
        <begin position="12"/>
        <end position="23"/>
    </location>
</feature>
<dbReference type="EC" id="2.3.2.-" evidence="6"/>
<dbReference type="EMBL" id="FN394495">
    <property type="protein sequence ID" value="CAY87361.1"/>
    <property type="molecule type" value="Genomic_DNA"/>
</dbReference>
<dbReference type="SMR" id="G0KYB1"/>
<dbReference type="BioCyc" id="MetaCyc:MONOMER-19549"/>
<dbReference type="UniPathway" id="UPA00267"/>
<dbReference type="GO" id="GO:0016407">
    <property type="term" value="F:acetyltransferase activity"/>
    <property type="evidence" value="ECO:0007669"/>
    <property type="project" value="InterPro"/>
</dbReference>
<dbReference type="GO" id="GO:0043386">
    <property type="term" value="P:mycotoxin biosynthetic process"/>
    <property type="evidence" value="ECO:0007669"/>
    <property type="project" value="InterPro"/>
</dbReference>
<dbReference type="Gene3D" id="3.30.559.10">
    <property type="entry name" value="Chloramphenicol acetyltransferase-like domain"/>
    <property type="match status" value="1"/>
</dbReference>
<dbReference type="Gene3D" id="3.30.559.30">
    <property type="entry name" value="Nonribosomal peptide synthetase, condensation domain"/>
    <property type="match status" value="1"/>
</dbReference>
<dbReference type="InterPro" id="IPR023213">
    <property type="entry name" value="CAT-like_dom_sf"/>
</dbReference>
<dbReference type="InterPro" id="IPR009992">
    <property type="entry name" value="Tri3/Sat12/Sat16/Mac1"/>
</dbReference>
<dbReference type="PANTHER" id="PTHR42034">
    <property type="entry name" value="CHROMOSOME 7, WHOLE GENOME SHOTGUN SEQUENCE-RELATED"/>
    <property type="match status" value="1"/>
</dbReference>
<dbReference type="PANTHER" id="PTHR42034:SF1">
    <property type="entry name" value="CONDENSATION DOMAIN-CONTAINING PROTEIN"/>
    <property type="match status" value="1"/>
</dbReference>
<dbReference type="Pfam" id="PF07428">
    <property type="entry name" value="Tri3"/>
    <property type="match status" value="1"/>
</dbReference>
<accession>G0KYB1</accession>
<sequence>MGSKLPELPKLSPEKHRWEKSNVDPRVLQRRGIGSEAIVGMERSNRRGQYDLYLLATLRTAHVSTSTPLSLLYLKEKLELALLVMRFEHPECACTVTWDDQVPPIIQYASPQNDEEALMWAKSSVHIRTTSQTGFDVRYEIEGKRQDLDQDNMEPSRPIVIYLISNVTNGDAQLTSGATVDVLLHMNHLFWDGISARMFTGDLFRELNKLINSNEQELPKLQWGTEASNLSAPVLDALKINIEELREEFEAASNQFVKALYENYGGWGLEFKSGLGLPRTDIHTSTATESKAIINGVKTRLGPQYTISHLAQAAVVIAMLEIIQPPNLTDKDIFVSPMPVNGRRWLKDGLADHHYSICETGAVIRIENIKSLVLNNNNDKGYRPRCDEKKPGEDVKKSFDQWLGNPYQLALGLAVHTLEASFLTANPMPFDKVAAPFFISDGRNEQFIPASITTTTGEILMTIDNFVFFLNQCLPYLAIRLESWKDASTLSVCYNKANYSQEEATKFLKCVAKYMLIFSQ</sequence>
<protein>
    <recommendedName>
        <fullName evidence="4">Trichothecene O-acetyltransferase TRI3</fullName>
        <ecNumber evidence="6">2.3.2.-</ecNumber>
    </recommendedName>
    <alternativeName>
        <fullName evidence="4">Trichothecene biosynthesis cluster protein 3</fullName>
    </alternativeName>
</protein>
<evidence type="ECO:0000256" key="1">
    <source>
        <dbReference type="SAM" id="MobiDB-lite"/>
    </source>
</evidence>
<evidence type="ECO:0000269" key="2">
    <source>
    </source>
</evidence>
<evidence type="ECO:0000269" key="3">
    <source>
    </source>
</evidence>
<evidence type="ECO:0000303" key="4">
    <source>
    </source>
</evidence>
<evidence type="ECO:0000305" key="5"/>
<evidence type="ECO:0000305" key="6">
    <source>
    </source>
</evidence>
<evidence type="ECO:0000305" key="7">
    <source>
    </source>
</evidence>